<dbReference type="EMBL" id="CP000570">
    <property type="protein sequence ID" value="ABN83147.1"/>
    <property type="molecule type" value="Genomic_DNA"/>
</dbReference>
<dbReference type="RefSeq" id="WP_004197945.1">
    <property type="nucleotide sequence ID" value="NC_009074.1"/>
</dbReference>
<dbReference type="SMR" id="A3NEG2"/>
<dbReference type="GeneID" id="93126536"/>
<dbReference type="KEGG" id="bpd:BURPS668_3729"/>
<dbReference type="HOGENOM" id="CLU_065898_2_2_4"/>
<dbReference type="GO" id="GO:0015935">
    <property type="term" value="C:small ribosomal subunit"/>
    <property type="evidence" value="ECO:0007669"/>
    <property type="project" value="InterPro"/>
</dbReference>
<dbReference type="GO" id="GO:0019843">
    <property type="term" value="F:rRNA binding"/>
    <property type="evidence" value="ECO:0007669"/>
    <property type="project" value="UniProtKB-UniRule"/>
</dbReference>
<dbReference type="GO" id="GO:0003735">
    <property type="term" value="F:structural constituent of ribosome"/>
    <property type="evidence" value="ECO:0007669"/>
    <property type="project" value="InterPro"/>
</dbReference>
<dbReference type="GO" id="GO:0006412">
    <property type="term" value="P:translation"/>
    <property type="evidence" value="ECO:0007669"/>
    <property type="project" value="UniProtKB-UniRule"/>
</dbReference>
<dbReference type="FunFam" id="3.30.160.20:FF:000001">
    <property type="entry name" value="30S ribosomal protein S5"/>
    <property type="match status" value="1"/>
</dbReference>
<dbReference type="FunFam" id="3.30.230.10:FF:000002">
    <property type="entry name" value="30S ribosomal protein S5"/>
    <property type="match status" value="1"/>
</dbReference>
<dbReference type="Gene3D" id="3.30.160.20">
    <property type="match status" value="1"/>
</dbReference>
<dbReference type="Gene3D" id="3.30.230.10">
    <property type="match status" value="1"/>
</dbReference>
<dbReference type="HAMAP" id="MF_01307_B">
    <property type="entry name" value="Ribosomal_uS5_B"/>
    <property type="match status" value="1"/>
</dbReference>
<dbReference type="InterPro" id="IPR020568">
    <property type="entry name" value="Ribosomal_Su5_D2-typ_SF"/>
</dbReference>
<dbReference type="InterPro" id="IPR000851">
    <property type="entry name" value="Ribosomal_uS5"/>
</dbReference>
<dbReference type="InterPro" id="IPR005712">
    <property type="entry name" value="Ribosomal_uS5_bac-type"/>
</dbReference>
<dbReference type="InterPro" id="IPR005324">
    <property type="entry name" value="Ribosomal_uS5_C"/>
</dbReference>
<dbReference type="InterPro" id="IPR013810">
    <property type="entry name" value="Ribosomal_uS5_N"/>
</dbReference>
<dbReference type="InterPro" id="IPR018192">
    <property type="entry name" value="Ribosomal_uS5_N_CS"/>
</dbReference>
<dbReference type="InterPro" id="IPR014721">
    <property type="entry name" value="Ribsml_uS5_D2-typ_fold_subgr"/>
</dbReference>
<dbReference type="NCBIfam" id="TIGR01021">
    <property type="entry name" value="rpsE_bact"/>
    <property type="match status" value="1"/>
</dbReference>
<dbReference type="PANTHER" id="PTHR48277">
    <property type="entry name" value="MITOCHONDRIAL RIBOSOMAL PROTEIN S5"/>
    <property type="match status" value="1"/>
</dbReference>
<dbReference type="PANTHER" id="PTHR48277:SF1">
    <property type="entry name" value="MITOCHONDRIAL RIBOSOMAL PROTEIN S5"/>
    <property type="match status" value="1"/>
</dbReference>
<dbReference type="Pfam" id="PF00333">
    <property type="entry name" value="Ribosomal_S5"/>
    <property type="match status" value="1"/>
</dbReference>
<dbReference type="Pfam" id="PF03719">
    <property type="entry name" value="Ribosomal_S5_C"/>
    <property type="match status" value="1"/>
</dbReference>
<dbReference type="SUPFAM" id="SSF54768">
    <property type="entry name" value="dsRNA-binding domain-like"/>
    <property type="match status" value="1"/>
</dbReference>
<dbReference type="SUPFAM" id="SSF54211">
    <property type="entry name" value="Ribosomal protein S5 domain 2-like"/>
    <property type="match status" value="1"/>
</dbReference>
<dbReference type="PROSITE" id="PS00585">
    <property type="entry name" value="RIBOSOMAL_S5"/>
    <property type="match status" value="1"/>
</dbReference>
<dbReference type="PROSITE" id="PS50881">
    <property type="entry name" value="S5_DSRBD"/>
    <property type="match status" value="1"/>
</dbReference>
<feature type="chain" id="PRO_0000323091" description="Small ribosomal subunit protein uS5">
    <location>
        <begin position="1"/>
        <end position="172"/>
    </location>
</feature>
<feature type="domain" description="S5 DRBM" evidence="1">
    <location>
        <begin position="17"/>
        <end position="80"/>
    </location>
</feature>
<protein>
    <recommendedName>
        <fullName evidence="1">Small ribosomal subunit protein uS5</fullName>
    </recommendedName>
    <alternativeName>
        <fullName evidence="2">30S ribosomal protein S5</fullName>
    </alternativeName>
</protein>
<proteinExistence type="inferred from homology"/>
<comment type="function">
    <text evidence="1">With S4 and S12 plays an important role in translational accuracy.</text>
</comment>
<comment type="function">
    <text evidence="1">Located at the back of the 30S subunit body where it stabilizes the conformation of the head with respect to the body.</text>
</comment>
<comment type="subunit">
    <text evidence="1">Part of the 30S ribosomal subunit. Contacts proteins S4 and S8.</text>
</comment>
<comment type="domain">
    <text>The N-terminal domain interacts with the head of the 30S subunit; the C-terminal domain interacts with the body and contacts protein S4. The interaction surface between S4 and S5 is involved in control of translational fidelity.</text>
</comment>
<comment type="similarity">
    <text evidence="1">Belongs to the universal ribosomal protein uS5 family.</text>
</comment>
<reference key="1">
    <citation type="journal article" date="2010" name="Genome Biol. Evol.">
        <title>Continuing evolution of Burkholderia mallei through genome reduction and large-scale rearrangements.</title>
        <authorList>
            <person name="Losada L."/>
            <person name="Ronning C.M."/>
            <person name="DeShazer D."/>
            <person name="Woods D."/>
            <person name="Fedorova N."/>
            <person name="Kim H.S."/>
            <person name="Shabalina S.A."/>
            <person name="Pearson T.R."/>
            <person name="Brinkac L."/>
            <person name="Tan P."/>
            <person name="Nandi T."/>
            <person name="Crabtree J."/>
            <person name="Badger J."/>
            <person name="Beckstrom-Sternberg S."/>
            <person name="Saqib M."/>
            <person name="Schutzer S.E."/>
            <person name="Keim P."/>
            <person name="Nierman W.C."/>
        </authorList>
    </citation>
    <scope>NUCLEOTIDE SEQUENCE [LARGE SCALE GENOMIC DNA]</scope>
    <source>
        <strain>668</strain>
    </source>
</reference>
<keyword id="KW-0687">Ribonucleoprotein</keyword>
<keyword id="KW-0689">Ribosomal protein</keyword>
<keyword id="KW-0694">RNA-binding</keyword>
<keyword id="KW-0699">rRNA-binding</keyword>
<organism>
    <name type="scientific">Burkholderia pseudomallei (strain 668)</name>
    <dbReference type="NCBI Taxonomy" id="320373"/>
    <lineage>
        <taxon>Bacteria</taxon>
        <taxon>Pseudomonadati</taxon>
        <taxon>Pseudomonadota</taxon>
        <taxon>Betaproteobacteria</taxon>
        <taxon>Burkholderiales</taxon>
        <taxon>Burkholderiaceae</taxon>
        <taxon>Burkholderia</taxon>
        <taxon>pseudomallei group</taxon>
    </lineage>
</organism>
<sequence length="172" mass="18150">MAKMQAKVQADERDDGLREKMISVNRVTKVVKGGRILGFAALTVVGDGDGRVGMGKGKAKEVPVAVQKAMEQARRNMFKVPLKNGTLQHEVHGKHGASTVLLAPAKDGTGVIAGGPMRAVFDVMGVQNVVAKSHGSTNPYNLVRATLDGLRKQSTPADIAAKRGKSVEEILG</sequence>
<accession>A3NEG2</accession>
<name>RS5_BURP6</name>
<gene>
    <name evidence="1" type="primary">rpsE</name>
    <name type="ordered locus">BURPS668_3729</name>
</gene>
<evidence type="ECO:0000255" key="1">
    <source>
        <dbReference type="HAMAP-Rule" id="MF_01307"/>
    </source>
</evidence>
<evidence type="ECO:0000305" key="2"/>